<accession>B5E973</accession>
<protein>
    <recommendedName>
        <fullName evidence="1">NADH-quinone oxidoreductase subunit A 1</fullName>
        <ecNumber evidence="1">7.1.1.-</ecNumber>
    </recommendedName>
    <alternativeName>
        <fullName evidence="1">NADH dehydrogenase I subunit A 1</fullName>
    </alternativeName>
    <alternativeName>
        <fullName evidence="1">NDH-1 subunit A 1</fullName>
    </alternativeName>
    <alternativeName>
        <fullName evidence="1">NUO1 1</fullName>
    </alternativeName>
</protein>
<comment type="function">
    <text evidence="1">NDH-1 shuttles electrons from NADH, via FMN and iron-sulfur (Fe-S) centers, to quinones in the respiratory chain. The immediate electron acceptor for the enzyme in this species is believed to be ubiquinone. Couples the redox reaction to proton translocation (for every two electrons transferred, four hydrogen ions are translocated across the cytoplasmic membrane), and thus conserves the redox energy in a proton gradient.</text>
</comment>
<comment type="catalytic activity">
    <reaction evidence="1">
        <text>a quinone + NADH + 5 H(+)(in) = a quinol + NAD(+) + 4 H(+)(out)</text>
        <dbReference type="Rhea" id="RHEA:57888"/>
        <dbReference type="ChEBI" id="CHEBI:15378"/>
        <dbReference type="ChEBI" id="CHEBI:24646"/>
        <dbReference type="ChEBI" id="CHEBI:57540"/>
        <dbReference type="ChEBI" id="CHEBI:57945"/>
        <dbReference type="ChEBI" id="CHEBI:132124"/>
    </reaction>
</comment>
<comment type="subunit">
    <text evidence="1">NDH-1 is composed of 14 different subunits. Subunits NuoA, H, J, K, L, M, N constitute the membrane sector of the complex.</text>
</comment>
<comment type="subcellular location">
    <subcellularLocation>
        <location evidence="1">Cell inner membrane</location>
        <topology evidence="1">Multi-pass membrane protein</topology>
    </subcellularLocation>
</comment>
<comment type="similarity">
    <text evidence="1">Belongs to the complex I subunit 3 family.</text>
</comment>
<sequence>MPVTAQQVELIPLAIYTLFAVGLIGILLLAARYLGSGKETSEKHIPFESGMVPTGNARHASQVPFYLIAIFFIVFDVEGAFILAWATSWDLLGIPGLVHITLFITVLLLGLVWLWMKGGLDWGPSAMRARGKRS</sequence>
<organism>
    <name type="scientific">Citrifermentans bemidjiense (strain ATCC BAA-1014 / DSM 16622 / JCM 12645 / Bem)</name>
    <name type="common">Geobacter bemidjiensis</name>
    <dbReference type="NCBI Taxonomy" id="404380"/>
    <lineage>
        <taxon>Bacteria</taxon>
        <taxon>Pseudomonadati</taxon>
        <taxon>Thermodesulfobacteriota</taxon>
        <taxon>Desulfuromonadia</taxon>
        <taxon>Geobacterales</taxon>
        <taxon>Geobacteraceae</taxon>
        <taxon>Citrifermentans</taxon>
    </lineage>
</organism>
<evidence type="ECO:0000255" key="1">
    <source>
        <dbReference type="HAMAP-Rule" id="MF_01394"/>
    </source>
</evidence>
<feature type="chain" id="PRO_0000362689" description="NADH-quinone oxidoreductase subunit A 1">
    <location>
        <begin position="1"/>
        <end position="134"/>
    </location>
</feature>
<feature type="transmembrane region" description="Helical" evidence="1">
    <location>
        <begin position="10"/>
        <end position="30"/>
    </location>
</feature>
<feature type="transmembrane region" description="Helical" evidence="1">
    <location>
        <begin position="65"/>
        <end position="85"/>
    </location>
</feature>
<feature type="transmembrane region" description="Helical" evidence="1">
    <location>
        <begin position="94"/>
        <end position="114"/>
    </location>
</feature>
<proteinExistence type="inferred from homology"/>
<reference key="1">
    <citation type="submission" date="2008-07" db="EMBL/GenBank/DDBJ databases">
        <title>Complete sequence of Geobacter bemidjiensis BEM.</title>
        <authorList>
            <consortium name="US DOE Joint Genome Institute"/>
            <person name="Lucas S."/>
            <person name="Copeland A."/>
            <person name="Lapidus A."/>
            <person name="Glavina del Rio T."/>
            <person name="Dalin E."/>
            <person name="Tice H."/>
            <person name="Bruce D."/>
            <person name="Goodwin L."/>
            <person name="Pitluck S."/>
            <person name="Kiss H."/>
            <person name="Brettin T."/>
            <person name="Detter J.C."/>
            <person name="Han C."/>
            <person name="Kuske C.R."/>
            <person name="Schmutz J."/>
            <person name="Larimer F."/>
            <person name="Land M."/>
            <person name="Hauser L."/>
            <person name="Kyrpides N."/>
            <person name="Lykidis A."/>
            <person name="Lovley D."/>
            <person name="Richardson P."/>
        </authorList>
    </citation>
    <scope>NUCLEOTIDE SEQUENCE [LARGE SCALE GENOMIC DNA]</scope>
    <source>
        <strain>ATCC BAA-1014 / DSM 16622 / JCM 12645 / Bem</strain>
    </source>
</reference>
<name>NUOA1_CITBB</name>
<dbReference type="EC" id="7.1.1.-" evidence="1"/>
<dbReference type="EMBL" id="CP001124">
    <property type="protein sequence ID" value="ACH37210.1"/>
    <property type="molecule type" value="Genomic_DNA"/>
</dbReference>
<dbReference type="RefSeq" id="WP_012528618.1">
    <property type="nucleotide sequence ID" value="NC_011146.1"/>
</dbReference>
<dbReference type="SMR" id="B5E973"/>
<dbReference type="STRING" id="404380.Gbem_0179"/>
<dbReference type="KEGG" id="gbm:Gbem_0179"/>
<dbReference type="eggNOG" id="COG0838">
    <property type="taxonomic scope" value="Bacteria"/>
</dbReference>
<dbReference type="HOGENOM" id="CLU_119549_2_0_7"/>
<dbReference type="OrthoDB" id="9791970at2"/>
<dbReference type="Proteomes" id="UP000008825">
    <property type="component" value="Chromosome"/>
</dbReference>
<dbReference type="GO" id="GO:0030964">
    <property type="term" value="C:NADH dehydrogenase complex"/>
    <property type="evidence" value="ECO:0007669"/>
    <property type="project" value="TreeGrafter"/>
</dbReference>
<dbReference type="GO" id="GO:0005886">
    <property type="term" value="C:plasma membrane"/>
    <property type="evidence" value="ECO:0007669"/>
    <property type="project" value="UniProtKB-SubCell"/>
</dbReference>
<dbReference type="GO" id="GO:0008137">
    <property type="term" value="F:NADH dehydrogenase (ubiquinone) activity"/>
    <property type="evidence" value="ECO:0007669"/>
    <property type="project" value="InterPro"/>
</dbReference>
<dbReference type="GO" id="GO:0050136">
    <property type="term" value="F:NADH:ubiquinone reductase (non-electrogenic) activity"/>
    <property type="evidence" value="ECO:0007669"/>
    <property type="project" value="UniProtKB-UniRule"/>
</dbReference>
<dbReference type="GO" id="GO:0048038">
    <property type="term" value="F:quinone binding"/>
    <property type="evidence" value="ECO:0007669"/>
    <property type="project" value="UniProtKB-KW"/>
</dbReference>
<dbReference type="Gene3D" id="1.20.58.1610">
    <property type="entry name" value="NADH:ubiquinone/plastoquinone oxidoreductase, chain 3"/>
    <property type="match status" value="1"/>
</dbReference>
<dbReference type="HAMAP" id="MF_01394">
    <property type="entry name" value="NDH1_NuoA"/>
    <property type="match status" value="1"/>
</dbReference>
<dbReference type="InterPro" id="IPR023043">
    <property type="entry name" value="NAD(P)H_OxRDtase_bac/plastid"/>
</dbReference>
<dbReference type="InterPro" id="IPR000440">
    <property type="entry name" value="NADH_UbQ/plastoQ_OxRdtase_su3"/>
</dbReference>
<dbReference type="InterPro" id="IPR038430">
    <property type="entry name" value="NDAH_ubi_oxred_su3_sf"/>
</dbReference>
<dbReference type="PANTHER" id="PTHR11058:SF21">
    <property type="entry name" value="NADH-QUINONE OXIDOREDUCTASE SUBUNIT A"/>
    <property type="match status" value="1"/>
</dbReference>
<dbReference type="PANTHER" id="PTHR11058">
    <property type="entry name" value="NADH-UBIQUINONE OXIDOREDUCTASE CHAIN 3"/>
    <property type="match status" value="1"/>
</dbReference>
<dbReference type="Pfam" id="PF00507">
    <property type="entry name" value="Oxidored_q4"/>
    <property type="match status" value="1"/>
</dbReference>
<gene>
    <name evidence="1" type="primary">nuoA1</name>
    <name type="ordered locus">Gbem_0179</name>
</gene>
<keyword id="KW-0997">Cell inner membrane</keyword>
<keyword id="KW-1003">Cell membrane</keyword>
<keyword id="KW-0472">Membrane</keyword>
<keyword id="KW-0520">NAD</keyword>
<keyword id="KW-0874">Quinone</keyword>
<keyword id="KW-1185">Reference proteome</keyword>
<keyword id="KW-1278">Translocase</keyword>
<keyword id="KW-0812">Transmembrane</keyword>
<keyword id="KW-1133">Transmembrane helix</keyword>
<keyword id="KW-0813">Transport</keyword>
<keyword id="KW-0830">Ubiquinone</keyword>